<organism>
    <name type="scientific">Brevibacillus brevis (strain 47 / JCM 6285 / NBRC 100599)</name>
    <dbReference type="NCBI Taxonomy" id="358681"/>
    <lineage>
        <taxon>Bacteria</taxon>
        <taxon>Bacillati</taxon>
        <taxon>Bacillota</taxon>
        <taxon>Bacilli</taxon>
        <taxon>Bacillales</taxon>
        <taxon>Paenibacillaceae</taxon>
        <taxon>Brevibacillus</taxon>
    </lineage>
</organism>
<gene>
    <name evidence="1" type="primary">queA</name>
    <name type="ordered locus">BBR47_18700</name>
</gene>
<name>QUEA_BREBN</name>
<keyword id="KW-0963">Cytoplasm</keyword>
<keyword id="KW-0671">Queuosine biosynthesis</keyword>
<keyword id="KW-1185">Reference proteome</keyword>
<keyword id="KW-0949">S-adenosyl-L-methionine</keyword>
<keyword id="KW-0808">Transferase</keyword>
<evidence type="ECO:0000255" key="1">
    <source>
        <dbReference type="HAMAP-Rule" id="MF_00113"/>
    </source>
</evidence>
<reference key="1">
    <citation type="submission" date="2005-03" db="EMBL/GenBank/DDBJ databases">
        <title>Brevibacillus brevis strain 47, complete genome.</title>
        <authorList>
            <person name="Hosoyama A."/>
            <person name="Yamada R."/>
            <person name="Hongo Y."/>
            <person name="Terui Y."/>
            <person name="Ankai A."/>
            <person name="Masuyama W."/>
            <person name="Sekiguchi M."/>
            <person name="Takeda T."/>
            <person name="Asano K."/>
            <person name="Ohji S."/>
            <person name="Ichikawa N."/>
            <person name="Narita S."/>
            <person name="Aoki N."/>
            <person name="Miura H."/>
            <person name="Matsushita S."/>
            <person name="Sekigawa T."/>
            <person name="Yamagata H."/>
            <person name="Yoshikawa H."/>
            <person name="Udaka S."/>
            <person name="Tanikawa S."/>
            <person name="Fujita N."/>
        </authorList>
    </citation>
    <scope>NUCLEOTIDE SEQUENCE [LARGE SCALE GENOMIC DNA]</scope>
    <source>
        <strain>47 / JCM 6285 / NBRC 100599</strain>
    </source>
</reference>
<dbReference type="EC" id="2.4.99.17" evidence="1"/>
<dbReference type="EMBL" id="AP008955">
    <property type="protein sequence ID" value="BAH42847.1"/>
    <property type="molecule type" value="Genomic_DNA"/>
</dbReference>
<dbReference type="RefSeq" id="WP_012685586.1">
    <property type="nucleotide sequence ID" value="NC_012491.1"/>
</dbReference>
<dbReference type="SMR" id="C0ZAN8"/>
<dbReference type="STRING" id="358681.BBR47_18700"/>
<dbReference type="KEGG" id="bbe:BBR47_18700"/>
<dbReference type="eggNOG" id="COG0809">
    <property type="taxonomic scope" value="Bacteria"/>
</dbReference>
<dbReference type="HOGENOM" id="CLU_039110_1_0_9"/>
<dbReference type="UniPathway" id="UPA00392"/>
<dbReference type="Proteomes" id="UP000001877">
    <property type="component" value="Chromosome"/>
</dbReference>
<dbReference type="GO" id="GO:0005737">
    <property type="term" value="C:cytoplasm"/>
    <property type="evidence" value="ECO:0007669"/>
    <property type="project" value="UniProtKB-SubCell"/>
</dbReference>
<dbReference type="GO" id="GO:0051075">
    <property type="term" value="F:S-adenosylmethionine:tRNA ribosyltransferase-isomerase activity"/>
    <property type="evidence" value="ECO:0007669"/>
    <property type="project" value="UniProtKB-EC"/>
</dbReference>
<dbReference type="GO" id="GO:0008616">
    <property type="term" value="P:queuosine biosynthetic process"/>
    <property type="evidence" value="ECO:0007669"/>
    <property type="project" value="UniProtKB-UniRule"/>
</dbReference>
<dbReference type="GO" id="GO:0002099">
    <property type="term" value="P:tRNA wobble guanine modification"/>
    <property type="evidence" value="ECO:0007669"/>
    <property type="project" value="TreeGrafter"/>
</dbReference>
<dbReference type="FunFam" id="2.40.10.240:FF:000002">
    <property type="entry name" value="S-adenosylmethionine:tRNA ribosyltransferase-isomerase"/>
    <property type="match status" value="1"/>
</dbReference>
<dbReference type="FunFam" id="3.40.1780.10:FF:000001">
    <property type="entry name" value="S-adenosylmethionine:tRNA ribosyltransferase-isomerase"/>
    <property type="match status" value="1"/>
</dbReference>
<dbReference type="Gene3D" id="2.40.10.240">
    <property type="entry name" value="QueA-like"/>
    <property type="match status" value="1"/>
</dbReference>
<dbReference type="Gene3D" id="3.40.1780.10">
    <property type="entry name" value="QueA-like"/>
    <property type="match status" value="1"/>
</dbReference>
<dbReference type="HAMAP" id="MF_00113">
    <property type="entry name" value="QueA"/>
    <property type="match status" value="1"/>
</dbReference>
<dbReference type="InterPro" id="IPR003699">
    <property type="entry name" value="QueA"/>
</dbReference>
<dbReference type="InterPro" id="IPR042118">
    <property type="entry name" value="QueA_dom1"/>
</dbReference>
<dbReference type="InterPro" id="IPR042119">
    <property type="entry name" value="QueA_dom2"/>
</dbReference>
<dbReference type="InterPro" id="IPR036100">
    <property type="entry name" value="QueA_sf"/>
</dbReference>
<dbReference type="NCBIfam" id="NF001140">
    <property type="entry name" value="PRK00147.1"/>
    <property type="match status" value="1"/>
</dbReference>
<dbReference type="NCBIfam" id="TIGR00113">
    <property type="entry name" value="queA"/>
    <property type="match status" value="1"/>
</dbReference>
<dbReference type="PANTHER" id="PTHR30307">
    <property type="entry name" value="S-ADENOSYLMETHIONINE:TRNA RIBOSYLTRANSFERASE-ISOMERASE"/>
    <property type="match status" value="1"/>
</dbReference>
<dbReference type="PANTHER" id="PTHR30307:SF0">
    <property type="entry name" value="S-ADENOSYLMETHIONINE:TRNA RIBOSYLTRANSFERASE-ISOMERASE"/>
    <property type="match status" value="1"/>
</dbReference>
<dbReference type="Pfam" id="PF02547">
    <property type="entry name" value="Queuosine_synth"/>
    <property type="match status" value="1"/>
</dbReference>
<dbReference type="SUPFAM" id="SSF111337">
    <property type="entry name" value="QueA-like"/>
    <property type="match status" value="1"/>
</dbReference>
<protein>
    <recommendedName>
        <fullName evidence="1">S-adenosylmethionine:tRNA ribosyltransferase-isomerase</fullName>
        <ecNumber evidence="1">2.4.99.17</ecNumber>
    </recommendedName>
    <alternativeName>
        <fullName evidence="1">Queuosine biosynthesis protein QueA</fullName>
    </alternativeName>
</protein>
<proteinExistence type="inferred from homology"/>
<comment type="function">
    <text evidence="1">Transfers and isomerizes the ribose moiety from AdoMet to the 7-aminomethyl group of 7-deazaguanine (preQ1-tRNA) to give epoxyqueuosine (oQ-tRNA).</text>
</comment>
<comment type="catalytic activity">
    <reaction evidence="1">
        <text>7-aminomethyl-7-carbaguanosine(34) in tRNA + S-adenosyl-L-methionine = epoxyqueuosine(34) in tRNA + adenine + L-methionine + 2 H(+)</text>
        <dbReference type="Rhea" id="RHEA:32155"/>
        <dbReference type="Rhea" id="RHEA-COMP:10342"/>
        <dbReference type="Rhea" id="RHEA-COMP:18582"/>
        <dbReference type="ChEBI" id="CHEBI:15378"/>
        <dbReference type="ChEBI" id="CHEBI:16708"/>
        <dbReference type="ChEBI" id="CHEBI:57844"/>
        <dbReference type="ChEBI" id="CHEBI:59789"/>
        <dbReference type="ChEBI" id="CHEBI:82833"/>
        <dbReference type="ChEBI" id="CHEBI:194443"/>
        <dbReference type="EC" id="2.4.99.17"/>
    </reaction>
</comment>
<comment type="pathway">
    <text evidence="1">tRNA modification; tRNA-queuosine biosynthesis.</text>
</comment>
<comment type="subunit">
    <text evidence="1">Monomer.</text>
</comment>
<comment type="subcellular location">
    <subcellularLocation>
        <location evidence="1">Cytoplasm</location>
    </subcellularLocation>
</comment>
<comment type="similarity">
    <text evidence="1">Belongs to the QueA family.</text>
</comment>
<accession>C0ZAN8</accession>
<feature type="chain" id="PRO_1000119143" description="S-adenosylmethionine:tRNA ribosyltransferase-isomerase">
    <location>
        <begin position="1"/>
        <end position="342"/>
    </location>
</feature>
<sequence length="342" mass="38172">MDVQQFDFDLPEHLIAQHPLEDRTSSRLLVLEKQTGNIVHQQFTHLIDHLQAGDVLVMNDSRVLPARLIGEKTDTGAKIEILLLKSLGEDRWETLVKPGKRMKPGTEVVFGNGLLRCVCEDVTETGGRIVRFLYEGIFYEILDQLGSMPLPPYIHAQLEDSERYQTVYAKERGSAAAPTAGLHFTKPYLEQIAAKGVQLAYVTLHVGLGTFRPVSADSVEEHVMHAEYYEIPEETVELVNQAKAEGRRVIAVGTTSCRTLETVGRANGGKLVATSGWTDIFIYPGYTFSILDGLLTNFHLPKSTLVMLVSALAGKENVMRAYKRAVEEEYRFFSFGDAMLIL</sequence>